<name>MUKF_HAEIG</name>
<sequence length="444" mass="51529">MIETSQTIPELVSWAKDREFSLNLPTERLVFLLAIAIYNNERLDGEMLEADLVDIFRHTMNAFEQSTDAIATRANNAINELVKQRLLNRFSSEFTEGLAIYRLTPLGVGVSDYYIRQREFSALRLSVQLSIVADEIQRASDSAEEGVENNESEHYWRRNVFAPLKYSVAEIFDSIDLSQRIMDENQQSIKNEIAELLTKDWQAAISSCERLLDETSGNLRELQDTLNAAGDKLQAQLLRIQDCVIGRDDLYFIDQLITDLQSKLDRIISWGQQAIDLWIGYDRHVHKFIRTAIDMDKNRVFSQRLRNSIHHYFDHPWFLWTAQAERLVDLRDEEMVLREDDALGELPEELQYESLSDLHDQIVEHMQGLLIAYRENNRPIDLSLVLKEQLENYPLSRHFDVARIIVDQAVRLGMANDDLSGIYPDWQAINKRGAEVQAHVIDKY</sequence>
<reference key="1">
    <citation type="journal article" date="2007" name="Genome Biol.">
        <title>Characterization and modeling of the Haemophilus influenzae core and supragenomes based on the complete genomic sequences of Rd and 12 clinical nontypeable strains.</title>
        <authorList>
            <person name="Hogg J.S."/>
            <person name="Hu F.Z."/>
            <person name="Janto B."/>
            <person name="Boissy R."/>
            <person name="Hayes J."/>
            <person name="Keefe R."/>
            <person name="Post J.C."/>
            <person name="Ehrlich G.D."/>
        </authorList>
    </citation>
    <scope>NUCLEOTIDE SEQUENCE [LARGE SCALE GENOMIC DNA]</scope>
    <source>
        <strain>PittGG</strain>
    </source>
</reference>
<dbReference type="EMBL" id="CP000672">
    <property type="protein sequence ID" value="ABQ99211.1"/>
    <property type="molecule type" value="Genomic_DNA"/>
</dbReference>
<dbReference type="SMR" id="A5UEK6"/>
<dbReference type="KEGG" id="hiq:CGSHiGG_00540"/>
<dbReference type="HOGENOM" id="CLU_049853_0_0_6"/>
<dbReference type="Proteomes" id="UP000001990">
    <property type="component" value="Chromosome"/>
</dbReference>
<dbReference type="GO" id="GO:0005737">
    <property type="term" value="C:cytoplasm"/>
    <property type="evidence" value="ECO:0007669"/>
    <property type="project" value="UniProtKB-UniRule"/>
</dbReference>
<dbReference type="GO" id="GO:0009295">
    <property type="term" value="C:nucleoid"/>
    <property type="evidence" value="ECO:0007669"/>
    <property type="project" value="UniProtKB-SubCell"/>
</dbReference>
<dbReference type="GO" id="GO:0005509">
    <property type="term" value="F:calcium ion binding"/>
    <property type="evidence" value="ECO:0007669"/>
    <property type="project" value="UniProtKB-UniRule"/>
</dbReference>
<dbReference type="GO" id="GO:0051301">
    <property type="term" value="P:cell division"/>
    <property type="evidence" value="ECO:0007669"/>
    <property type="project" value="UniProtKB-KW"/>
</dbReference>
<dbReference type="GO" id="GO:0030261">
    <property type="term" value="P:chromosome condensation"/>
    <property type="evidence" value="ECO:0007669"/>
    <property type="project" value="UniProtKB-KW"/>
</dbReference>
<dbReference type="GO" id="GO:0007059">
    <property type="term" value="P:chromosome segregation"/>
    <property type="evidence" value="ECO:0007669"/>
    <property type="project" value="UniProtKB-UniRule"/>
</dbReference>
<dbReference type="GO" id="GO:0006260">
    <property type="term" value="P:DNA replication"/>
    <property type="evidence" value="ECO:0007669"/>
    <property type="project" value="UniProtKB-UniRule"/>
</dbReference>
<dbReference type="CDD" id="cd16337">
    <property type="entry name" value="MukF_C"/>
    <property type="match status" value="1"/>
</dbReference>
<dbReference type="Gene3D" id="1.20.58.590">
    <property type="entry name" value="Chromosome partition protein MukF, middle domain"/>
    <property type="match status" value="1"/>
</dbReference>
<dbReference type="Gene3D" id="1.10.225.40">
    <property type="entry name" value="MukF, C-terminal domain"/>
    <property type="match status" value="1"/>
</dbReference>
<dbReference type="Gene3D" id="1.10.10.10">
    <property type="entry name" value="Winged helix-like DNA-binding domain superfamily/Winged helix DNA-binding domain"/>
    <property type="match status" value="1"/>
</dbReference>
<dbReference type="HAMAP" id="MF_01803">
    <property type="entry name" value="MukF"/>
    <property type="match status" value="1"/>
</dbReference>
<dbReference type="InterPro" id="IPR005582">
    <property type="entry name" value="Chromosome_partition_MukF"/>
</dbReference>
<dbReference type="InterPro" id="IPR033441">
    <property type="entry name" value="MukF_C"/>
</dbReference>
<dbReference type="InterPro" id="IPR038198">
    <property type="entry name" value="MukF_C_sf"/>
</dbReference>
<dbReference type="InterPro" id="IPR033440">
    <property type="entry name" value="MukF_M"/>
</dbReference>
<dbReference type="InterPro" id="IPR036141">
    <property type="entry name" value="MukF_M_sp"/>
</dbReference>
<dbReference type="InterPro" id="IPR033439">
    <property type="entry name" value="MukF_WHTH"/>
</dbReference>
<dbReference type="InterPro" id="IPR036388">
    <property type="entry name" value="WH-like_DNA-bd_sf"/>
</dbReference>
<dbReference type="InterPro" id="IPR036390">
    <property type="entry name" value="WH_DNA-bd_sf"/>
</dbReference>
<dbReference type="NCBIfam" id="NF003615">
    <property type="entry name" value="PRK05260.1"/>
    <property type="match status" value="1"/>
</dbReference>
<dbReference type="Pfam" id="PF03882">
    <property type="entry name" value="KicB"/>
    <property type="match status" value="1"/>
</dbReference>
<dbReference type="Pfam" id="PF17193">
    <property type="entry name" value="MukF_C"/>
    <property type="match status" value="1"/>
</dbReference>
<dbReference type="Pfam" id="PF17192">
    <property type="entry name" value="MukF_M"/>
    <property type="match status" value="1"/>
</dbReference>
<dbReference type="PIRSF" id="PIRSF018282">
    <property type="entry name" value="MukF"/>
    <property type="match status" value="1"/>
</dbReference>
<dbReference type="SUPFAM" id="SSF140570">
    <property type="entry name" value="MukF C-terminal domain-like"/>
    <property type="match status" value="1"/>
</dbReference>
<dbReference type="SUPFAM" id="SSF46785">
    <property type="entry name" value="Winged helix' DNA-binding domain"/>
    <property type="match status" value="1"/>
</dbReference>
<accession>A5UEK6</accession>
<feature type="chain" id="PRO_1000069933" description="Chromosome partition protein MukF">
    <location>
        <begin position="1"/>
        <end position="444"/>
    </location>
</feature>
<feature type="region of interest" description="Leucine-zipper">
    <location>
        <begin position="212"/>
        <end position="240"/>
    </location>
</feature>
<organism>
    <name type="scientific">Haemophilus influenzae (strain PittGG)</name>
    <dbReference type="NCBI Taxonomy" id="374931"/>
    <lineage>
        <taxon>Bacteria</taxon>
        <taxon>Pseudomonadati</taxon>
        <taxon>Pseudomonadota</taxon>
        <taxon>Gammaproteobacteria</taxon>
        <taxon>Pasteurellales</taxon>
        <taxon>Pasteurellaceae</taxon>
        <taxon>Haemophilus</taxon>
    </lineage>
</organism>
<proteinExistence type="inferred from homology"/>
<keyword id="KW-0106">Calcium</keyword>
<keyword id="KW-0131">Cell cycle</keyword>
<keyword id="KW-0132">Cell division</keyword>
<keyword id="KW-0159">Chromosome partition</keyword>
<keyword id="KW-0963">Cytoplasm</keyword>
<keyword id="KW-0226">DNA condensation</keyword>
<protein>
    <recommendedName>
        <fullName evidence="1">Chromosome partition protein MukF</fullName>
    </recommendedName>
</protein>
<gene>
    <name evidence="1" type="primary">mukF</name>
    <name type="ordered locus">CGSHiGG_00540</name>
</gene>
<comment type="function">
    <text evidence="1">Involved in chromosome condensation, segregation and cell cycle progression. May participate in facilitating chromosome segregation by condensation DNA from both sides of a centrally located replisome during cell division. Not required for mini-F plasmid partitioning. Probably acts via its interaction with MukB and MukE. Overexpression results in anucleate cells. It has a calcium binding activity.</text>
</comment>
<comment type="subunit">
    <text evidence="1">Interacts, and probably forms a ternary complex, with MukE and MukB via its C-terminal region. The complex formation is stimulated by calcium or magnesium. It is required for an interaction between MukE and MukB.</text>
</comment>
<comment type="subcellular location">
    <subcellularLocation>
        <location evidence="1">Cytoplasm</location>
        <location evidence="1">Nucleoid</location>
    </subcellularLocation>
    <text evidence="1">Restricted to the nucleoid region.</text>
</comment>
<comment type="similarity">
    <text evidence="1">Belongs to the MukF family.</text>
</comment>
<evidence type="ECO:0000255" key="1">
    <source>
        <dbReference type="HAMAP-Rule" id="MF_01803"/>
    </source>
</evidence>